<organism>
    <name type="scientific">Methanococcus maripaludis (strain DSM 14266 / JCM 13030 / NBRC 101832 / S2 / LL)</name>
    <dbReference type="NCBI Taxonomy" id="267377"/>
    <lineage>
        <taxon>Archaea</taxon>
        <taxon>Methanobacteriati</taxon>
        <taxon>Methanobacteriota</taxon>
        <taxon>Methanomada group</taxon>
        <taxon>Methanococci</taxon>
        <taxon>Methanococcales</taxon>
        <taxon>Methanococcaceae</taxon>
        <taxon>Methanococcus</taxon>
    </lineage>
</organism>
<evidence type="ECO:0000255" key="1">
    <source>
        <dbReference type="HAMAP-Rule" id="MF_00123"/>
    </source>
</evidence>
<comment type="catalytic activity">
    <reaction evidence="1">
        <text>tRNA(Arg) + L-arginine + ATP = L-arginyl-tRNA(Arg) + AMP + diphosphate</text>
        <dbReference type="Rhea" id="RHEA:20301"/>
        <dbReference type="Rhea" id="RHEA-COMP:9658"/>
        <dbReference type="Rhea" id="RHEA-COMP:9673"/>
        <dbReference type="ChEBI" id="CHEBI:30616"/>
        <dbReference type="ChEBI" id="CHEBI:32682"/>
        <dbReference type="ChEBI" id="CHEBI:33019"/>
        <dbReference type="ChEBI" id="CHEBI:78442"/>
        <dbReference type="ChEBI" id="CHEBI:78513"/>
        <dbReference type="ChEBI" id="CHEBI:456215"/>
        <dbReference type="EC" id="6.1.1.19"/>
    </reaction>
</comment>
<comment type="subcellular location">
    <subcellularLocation>
        <location evidence="1">Cytoplasm</location>
    </subcellularLocation>
</comment>
<comment type="similarity">
    <text evidence="1">Belongs to the class-I aminoacyl-tRNA synthetase family.</text>
</comment>
<gene>
    <name evidence="1" type="primary">argS</name>
    <name type="ordered locus">MMP1026</name>
</gene>
<protein>
    <recommendedName>
        <fullName evidence="1">Arginine--tRNA ligase</fullName>
        <ecNumber evidence="1">6.1.1.19</ecNumber>
    </recommendedName>
    <alternativeName>
        <fullName evidence="1">Arginyl-tRNA synthetase</fullName>
        <shortName evidence="1">ArgRS</shortName>
    </alternativeName>
</protein>
<sequence length="566" mass="64132">MDVENLIITTLKDKVKGLTGNEMDIRLDEPPAINMGDYSTNISFRLAKDLKKAPKMIAEDIANSLSILGIERIEAVNGYINFFMNYSDFSKETVSKISDEKENFGKLEKRNEKVILEHTSANPNGPFHIGHGRNMVIGDSLKRILIASGYDVETQYYVNDMGRQEAIVVFGNEKFELDNSKKADHAIGEVYVETNKLLAENEELEQEILNLMKNYESACEAGIENELTEKFKNAVNYSLGGFKETLLTLNIYHDKFVWESEFVKSGMVREVINRLMNTGKVVEDEVYRLDLSDYGIEKKLVLARLNGTSLYSTRDIAYHITKMENCDFAVNLLGADHKLTAVMVNKTLALLGYNEAEVVFYEFISLPEGSMSTRKGRFISMDELFEEAKSRAAEEVRKRGVAQSEEEIEEIAKKIAVGAVRYNIVRIAPEKPMVFRWDEALDFEKVGCPVIQYAHARCSRILENVENISNENLFAYDMNENEKTIVKLLSKLPKIVEKAAEVRKPQIVANYVLDVAQGFNKFYANCPVLKEENETVKNSRLAIVSTTKTVLENTLDLLGIEMPGKM</sequence>
<reference key="1">
    <citation type="journal article" date="2004" name="J. Bacteriol.">
        <title>Complete genome sequence of the genetically tractable hydrogenotrophic methanogen Methanococcus maripaludis.</title>
        <authorList>
            <person name="Hendrickson E.L."/>
            <person name="Kaul R."/>
            <person name="Zhou Y."/>
            <person name="Bovee D."/>
            <person name="Chapman P."/>
            <person name="Chung J."/>
            <person name="Conway de Macario E."/>
            <person name="Dodsworth J.A."/>
            <person name="Gillett W."/>
            <person name="Graham D.E."/>
            <person name="Hackett M."/>
            <person name="Haydock A.K."/>
            <person name="Kang A."/>
            <person name="Land M.L."/>
            <person name="Levy R."/>
            <person name="Lie T.J."/>
            <person name="Major T.A."/>
            <person name="Moore B.C."/>
            <person name="Porat I."/>
            <person name="Palmeiri A."/>
            <person name="Rouse G."/>
            <person name="Saenphimmachak C."/>
            <person name="Soell D."/>
            <person name="Van Dien S."/>
            <person name="Wang T."/>
            <person name="Whitman W.B."/>
            <person name="Xia Q."/>
            <person name="Zhang Y."/>
            <person name="Larimer F.W."/>
            <person name="Olson M.V."/>
            <person name="Leigh J.A."/>
        </authorList>
    </citation>
    <scope>NUCLEOTIDE SEQUENCE [LARGE SCALE GENOMIC DNA]</scope>
    <source>
        <strain>DSM 14266 / JCM 13030 / NBRC 101832 / S2 / LL</strain>
    </source>
</reference>
<proteinExistence type="inferred from homology"/>
<name>SYR_METMP</name>
<accession>Q6LYG5</accession>
<feature type="chain" id="PRO_0000242129" description="Arginine--tRNA ligase">
    <location>
        <begin position="1"/>
        <end position="566"/>
    </location>
</feature>
<feature type="short sequence motif" description="'HIGH' region">
    <location>
        <begin position="121"/>
        <end position="131"/>
    </location>
</feature>
<keyword id="KW-0030">Aminoacyl-tRNA synthetase</keyword>
<keyword id="KW-0067">ATP-binding</keyword>
<keyword id="KW-0963">Cytoplasm</keyword>
<keyword id="KW-0436">Ligase</keyword>
<keyword id="KW-0547">Nucleotide-binding</keyword>
<keyword id="KW-0648">Protein biosynthesis</keyword>
<keyword id="KW-1185">Reference proteome</keyword>
<dbReference type="EC" id="6.1.1.19" evidence="1"/>
<dbReference type="EMBL" id="BX950229">
    <property type="protein sequence ID" value="CAF30582.1"/>
    <property type="molecule type" value="Genomic_DNA"/>
</dbReference>
<dbReference type="RefSeq" id="WP_011170970.1">
    <property type="nucleotide sequence ID" value="NC_005791.1"/>
</dbReference>
<dbReference type="SMR" id="Q6LYG5"/>
<dbReference type="STRING" id="267377.MMP1026"/>
<dbReference type="EnsemblBacteria" id="CAF30582">
    <property type="protein sequence ID" value="CAF30582"/>
    <property type="gene ID" value="MMP1026"/>
</dbReference>
<dbReference type="GeneID" id="2761358"/>
<dbReference type="KEGG" id="mmp:MMP1026"/>
<dbReference type="PATRIC" id="fig|267377.15.peg.1056"/>
<dbReference type="eggNOG" id="arCOG00487">
    <property type="taxonomic scope" value="Archaea"/>
</dbReference>
<dbReference type="HOGENOM" id="CLU_006406_6_1_2"/>
<dbReference type="OrthoDB" id="372102at2157"/>
<dbReference type="Proteomes" id="UP000000590">
    <property type="component" value="Chromosome"/>
</dbReference>
<dbReference type="GO" id="GO:0005737">
    <property type="term" value="C:cytoplasm"/>
    <property type="evidence" value="ECO:0007669"/>
    <property type="project" value="UniProtKB-SubCell"/>
</dbReference>
<dbReference type="GO" id="GO:0004814">
    <property type="term" value="F:arginine-tRNA ligase activity"/>
    <property type="evidence" value="ECO:0007669"/>
    <property type="project" value="UniProtKB-UniRule"/>
</dbReference>
<dbReference type="GO" id="GO:0005524">
    <property type="term" value="F:ATP binding"/>
    <property type="evidence" value="ECO:0007669"/>
    <property type="project" value="UniProtKB-UniRule"/>
</dbReference>
<dbReference type="GO" id="GO:0006420">
    <property type="term" value="P:arginyl-tRNA aminoacylation"/>
    <property type="evidence" value="ECO:0007669"/>
    <property type="project" value="UniProtKB-UniRule"/>
</dbReference>
<dbReference type="CDD" id="cd00671">
    <property type="entry name" value="ArgRS_core"/>
    <property type="match status" value="1"/>
</dbReference>
<dbReference type="Gene3D" id="3.30.1360.70">
    <property type="entry name" value="Arginyl tRNA synthetase N-terminal domain"/>
    <property type="match status" value="1"/>
</dbReference>
<dbReference type="Gene3D" id="3.40.50.620">
    <property type="entry name" value="HUPs"/>
    <property type="match status" value="1"/>
</dbReference>
<dbReference type="Gene3D" id="1.10.730.10">
    <property type="entry name" value="Isoleucyl-tRNA Synthetase, Domain 1"/>
    <property type="match status" value="1"/>
</dbReference>
<dbReference type="HAMAP" id="MF_00123">
    <property type="entry name" value="Arg_tRNA_synth"/>
    <property type="match status" value="1"/>
</dbReference>
<dbReference type="InterPro" id="IPR001412">
    <property type="entry name" value="aa-tRNA-synth_I_CS"/>
</dbReference>
<dbReference type="InterPro" id="IPR001278">
    <property type="entry name" value="Arg-tRNA-ligase"/>
</dbReference>
<dbReference type="InterPro" id="IPR005148">
    <property type="entry name" value="Arg-tRNA-synth_N"/>
</dbReference>
<dbReference type="InterPro" id="IPR036695">
    <property type="entry name" value="Arg-tRNA-synth_N_sf"/>
</dbReference>
<dbReference type="InterPro" id="IPR035684">
    <property type="entry name" value="ArgRS_core"/>
</dbReference>
<dbReference type="InterPro" id="IPR008909">
    <property type="entry name" value="DALR_anticod-bd"/>
</dbReference>
<dbReference type="InterPro" id="IPR014729">
    <property type="entry name" value="Rossmann-like_a/b/a_fold"/>
</dbReference>
<dbReference type="InterPro" id="IPR009080">
    <property type="entry name" value="tRNAsynth_Ia_anticodon-bd"/>
</dbReference>
<dbReference type="NCBIfam" id="TIGR00456">
    <property type="entry name" value="argS"/>
    <property type="match status" value="1"/>
</dbReference>
<dbReference type="PANTHER" id="PTHR11956:SF5">
    <property type="entry name" value="ARGININE--TRNA LIGASE, CYTOPLASMIC"/>
    <property type="match status" value="1"/>
</dbReference>
<dbReference type="PANTHER" id="PTHR11956">
    <property type="entry name" value="ARGINYL-TRNA SYNTHETASE"/>
    <property type="match status" value="1"/>
</dbReference>
<dbReference type="Pfam" id="PF03485">
    <property type="entry name" value="Arg_tRNA_synt_N"/>
    <property type="match status" value="1"/>
</dbReference>
<dbReference type="Pfam" id="PF05746">
    <property type="entry name" value="DALR_1"/>
    <property type="match status" value="1"/>
</dbReference>
<dbReference type="Pfam" id="PF00750">
    <property type="entry name" value="tRNA-synt_1d"/>
    <property type="match status" value="1"/>
</dbReference>
<dbReference type="PRINTS" id="PR01038">
    <property type="entry name" value="TRNASYNTHARG"/>
</dbReference>
<dbReference type="SMART" id="SM01016">
    <property type="entry name" value="Arg_tRNA_synt_N"/>
    <property type="match status" value="1"/>
</dbReference>
<dbReference type="SMART" id="SM00836">
    <property type="entry name" value="DALR_1"/>
    <property type="match status" value="1"/>
</dbReference>
<dbReference type="SUPFAM" id="SSF47323">
    <property type="entry name" value="Anticodon-binding domain of a subclass of class I aminoacyl-tRNA synthetases"/>
    <property type="match status" value="1"/>
</dbReference>
<dbReference type="SUPFAM" id="SSF55190">
    <property type="entry name" value="Arginyl-tRNA synthetase (ArgRS), N-terminal 'additional' domain"/>
    <property type="match status" value="1"/>
</dbReference>
<dbReference type="SUPFAM" id="SSF52374">
    <property type="entry name" value="Nucleotidylyl transferase"/>
    <property type="match status" value="1"/>
</dbReference>
<dbReference type="PROSITE" id="PS00178">
    <property type="entry name" value="AA_TRNA_LIGASE_I"/>
    <property type="match status" value="1"/>
</dbReference>